<protein>
    <recommendedName>
        <fullName evidence="2">Inorganic pyrophosphatase</fullName>
        <ecNumber evidence="2">3.6.1.1</ecNumber>
    </recommendedName>
    <alternativeName>
        <fullName evidence="2">Pyrophosphate phospho-hydrolase</fullName>
        <shortName evidence="2">PPase</shortName>
    </alternativeName>
</protein>
<proteinExistence type="inferred from homology"/>
<evidence type="ECO:0000250" key="1"/>
<evidence type="ECO:0000255" key="2">
    <source>
        <dbReference type="HAMAP-Rule" id="MF_00209"/>
    </source>
</evidence>
<feature type="initiator methionine" description="Removed" evidence="1">
    <location>
        <position position="1"/>
    </location>
</feature>
<feature type="chain" id="PRO_0000137531" description="Inorganic pyrophosphatase">
    <location>
        <begin position="2"/>
        <end position="176"/>
    </location>
</feature>
<feature type="binding site" evidence="2">
    <location>
        <position position="30"/>
    </location>
    <ligand>
        <name>substrate</name>
    </ligand>
</feature>
<feature type="binding site" evidence="2">
    <location>
        <position position="44"/>
    </location>
    <ligand>
        <name>substrate</name>
    </ligand>
</feature>
<feature type="binding site" evidence="2">
    <location>
        <position position="56"/>
    </location>
    <ligand>
        <name>substrate</name>
    </ligand>
</feature>
<feature type="binding site" evidence="2">
    <location>
        <position position="66"/>
    </location>
    <ligand>
        <name>Mg(2+)</name>
        <dbReference type="ChEBI" id="CHEBI:18420"/>
        <label>1</label>
    </ligand>
</feature>
<feature type="binding site" evidence="2">
    <location>
        <position position="71"/>
    </location>
    <ligand>
        <name>Mg(2+)</name>
        <dbReference type="ChEBI" id="CHEBI:18420"/>
        <label>1</label>
    </ligand>
</feature>
<feature type="binding site" evidence="2">
    <location>
        <position position="71"/>
    </location>
    <ligand>
        <name>Mg(2+)</name>
        <dbReference type="ChEBI" id="CHEBI:18420"/>
        <label>2</label>
    </ligand>
</feature>
<feature type="binding site" evidence="2">
    <location>
        <position position="103"/>
    </location>
    <ligand>
        <name>Mg(2+)</name>
        <dbReference type="ChEBI" id="CHEBI:18420"/>
        <label>1</label>
    </ligand>
</feature>
<feature type="binding site" evidence="2">
    <location>
        <position position="142"/>
    </location>
    <ligand>
        <name>substrate</name>
    </ligand>
</feature>
<organism>
    <name type="scientific">Salmonella typhi</name>
    <dbReference type="NCBI Taxonomy" id="90370"/>
    <lineage>
        <taxon>Bacteria</taxon>
        <taxon>Pseudomonadati</taxon>
        <taxon>Pseudomonadota</taxon>
        <taxon>Gammaproteobacteria</taxon>
        <taxon>Enterobacterales</taxon>
        <taxon>Enterobacteriaceae</taxon>
        <taxon>Salmonella</taxon>
    </lineage>
</organism>
<sequence>MSLLNVPAGKELPEDIYVVIEIPANADPIKYEVDKESGALFVDRFMSTAMFYPCNYGYINHTLSLDGDPVDVLVPTPYPLQPGAVIRCRPVGVLKMTDESGEDAKLVAVPHTKLSKEYDHIKDVNDLPELLKAQITHFFEHYKDLEKGKWVKVDGWDNAEAAKAEIVASFERAAKK</sequence>
<keyword id="KW-0963">Cytoplasm</keyword>
<keyword id="KW-0378">Hydrolase</keyword>
<keyword id="KW-0460">Magnesium</keyword>
<keyword id="KW-0479">Metal-binding</keyword>
<reference key="1">
    <citation type="journal article" date="2001" name="Nature">
        <title>Complete genome sequence of a multiple drug resistant Salmonella enterica serovar Typhi CT18.</title>
        <authorList>
            <person name="Parkhill J."/>
            <person name="Dougan G."/>
            <person name="James K.D."/>
            <person name="Thomson N.R."/>
            <person name="Pickard D."/>
            <person name="Wain J."/>
            <person name="Churcher C.M."/>
            <person name="Mungall K.L."/>
            <person name="Bentley S.D."/>
            <person name="Holden M.T.G."/>
            <person name="Sebaihia M."/>
            <person name="Baker S."/>
            <person name="Basham D."/>
            <person name="Brooks K."/>
            <person name="Chillingworth T."/>
            <person name="Connerton P."/>
            <person name="Cronin A."/>
            <person name="Davis P."/>
            <person name="Davies R.M."/>
            <person name="Dowd L."/>
            <person name="White N."/>
            <person name="Farrar J."/>
            <person name="Feltwell T."/>
            <person name="Hamlin N."/>
            <person name="Haque A."/>
            <person name="Hien T.T."/>
            <person name="Holroyd S."/>
            <person name="Jagels K."/>
            <person name="Krogh A."/>
            <person name="Larsen T.S."/>
            <person name="Leather S."/>
            <person name="Moule S."/>
            <person name="O'Gaora P."/>
            <person name="Parry C."/>
            <person name="Quail M.A."/>
            <person name="Rutherford K.M."/>
            <person name="Simmonds M."/>
            <person name="Skelton J."/>
            <person name="Stevens K."/>
            <person name="Whitehead S."/>
            <person name="Barrell B.G."/>
        </authorList>
    </citation>
    <scope>NUCLEOTIDE SEQUENCE [LARGE SCALE GENOMIC DNA]</scope>
    <source>
        <strain>CT18</strain>
    </source>
</reference>
<reference key="2">
    <citation type="journal article" date="2003" name="J. Bacteriol.">
        <title>Comparative genomics of Salmonella enterica serovar Typhi strains Ty2 and CT18.</title>
        <authorList>
            <person name="Deng W."/>
            <person name="Liou S.-R."/>
            <person name="Plunkett G. III"/>
            <person name="Mayhew G.F."/>
            <person name="Rose D.J."/>
            <person name="Burland V."/>
            <person name="Kodoyianni V."/>
            <person name="Schwartz D.C."/>
            <person name="Blattner F.R."/>
        </authorList>
    </citation>
    <scope>NUCLEOTIDE SEQUENCE [LARGE SCALE GENOMIC DNA]</scope>
    <source>
        <strain>ATCC 700931 / Ty2</strain>
    </source>
</reference>
<accession>P65749</accession>
<accession>Q8XGI0</accession>
<dbReference type="EC" id="3.6.1.1" evidence="2"/>
<dbReference type="EMBL" id="AL513382">
    <property type="protein sequence ID" value="CAD06894.1"/>
    <property type="molecule type" value="Genomic_DNA"/>
</dbReference>
<dbReference type="EMBL" id="AE014613">
    <property type="protein sequence ID" value="AAO71915.1"/>
    <property type="molecule type" value="Genomic_DNA"/>
</dbReference>
<dbReference type="RefSeq" id="NP_458851.1">
    <property type="nucleotide sequence ID" value="NC_003198.1"/>
</dbReference>
<dbReference type="RefSeq" id="WP_000055079.1">
    <property type="nucleotide sequence ID" value="NZ_WSUR01000016.1"/>
</dbReference>
<dbReference type="SMR" id="P65749"/>
<dbReference type="STRING" id="220341.gene:17588594"/>
<dbReference type="KEGG" id="stt:t4468"/>
<dbReference type="KEGG" id="sty:STY4773"/>
<dbReference type="PATRIC" id="fig|220341.7.peg.4877"/>
<dbReference type="eggNOG" id="COG0221">
    <property type="taxonomic scope" value="Bacteria"/>
</dbReference>
<dbReference type="HOGENOM" id="CLU_073198_1_0_6"/>
<dbReference type="OMA" id="IHHVSEF"/>
<dbReference type="OrthoDB" id="5187599at2"/>
<dbReference type="Proteomes" id="UP000000541">
    <property type="component" value="Chromosome"/>
</dbReference>
<dbReference type="Proteomes" id="UP000002670">
    <property type="component" value="Chromosome"/>
</dbReference>
<dbReference type="GO" id="GO:0005737">
    <property type="term" value="C:cytoplasm"/>
    <property type="evidence" value="ECO:0007669"/>
    <property type="project" value="UniProtKB-SubCell"/>
</dbReference>
<dbReference type="GO" id="GO:0004427">
    <property type="term" value="F:inorganic diphosphate phosphatase activity"/>
    <property type="evidence" value="ECO:0007669"/>
    <property type="project" value="UniProtKB-UniRule"/>
</dbReference>
<dbReference type="GO" id="GO:0000287">
    <property type="term" value="F:magnesium ion binding"/>
    <property type="evidence" value="ECO:0007669"/>
    <property type="project" value="UniProtKB-UniRule"/>
</dbReference>
<dbReference type="GO" id="GO:0006796">
    <property type="term" value="P:phosphate-containing compound metabolic process"/>
    <property type="evidence" value="ECO:0007669"/>
    <property type="project" value="InterPro"/>
</dbReference>
<dbReference type="CDD" id="cd00412">
    <property type="entry name" value="pyrophosphatase"/>
    <property type="match status" value="1"/>
</dbReference>
<dbReference type="FunFam" id="3.90.80.10:FF:000001">
    <property type="entry name" value="Inorganic pyrophosphatase"/>
    <property type="match status" value="1"/>
</dbReference>
<dbReference type="Gene3D" id="3.90.80.10">
    <property type="entry name" value="Inorganic pyrophosphatase"/>
    <property type="match status" value="1"/>
</dbReference>
<dbReference type="HAMAP" id="MF_00209">
    <property type="entry name" value="Inorganic_PPase"/>
    <property type="match status" value="1"/>
</dbReference>
<dbReference type="InterPro" id="IPR008162">
    <property type="entry name" value="Pyrophosphatase"/>
</dbReference>
<dbReference type="InterPro" id="IPR036649">
    <property type="entry name" value="Pyrophosphatase_sf"/>
</dbReference>
<dbReference type="NCBIfam" id="NF002317">
    <property type="entry name" value="PRK01250.1"/>
    <property type="match status" value="1"/>
</dbReference>
<dbReference type="PANTHER" id="PTHR10286">
    <property type="entry name" value="INORGANIC PYROPHOSPHATASE"/>
    <property type="match status" value="1"/>
</dbReference>
<dbReference type="Pfam" id="PF00719">
    <property type="entry name" value="Pyrophosphatase"/>
    <property type="match status" value="1"/>
</dbReference>
<dbReference type="SUPFAM" id="SSF50324">
    <property type="entry name" value="Inorganic pyrophosphatase"/>
    <property type="match status" value="1"/>
</dbReference>
<dbReference type="PROSITE" id="PS00387">
    <property type="entry name" value="PPASE"/>
    <property type="match status" value="1"/>
</dbReference>
<gene>
    <name evidence="2" type="primary">ppa</name>
    <name type="ordered locus">STY4773</name>
    <name type="ordered locus">t4468</name>
</gene>
<comment type="function">
    <text evidence="2">Catalyzes the hydrolysis of inorganic pyrophosphate (PPi) forming two phosphate ions.</text>
</comment>
<comment type="catalytic activity">
    <reaction evidence="2">
        <text>diphosphate + H2O = 2 phosphate + H(+)</text>
        <dbReference type="Rhea" id="RHEA:24576"/>
        <dbReference type="ChEBI" id="CHEBI:15377"/>
        <dbReference type="ChEBI" id="CHEBI:15378"/>
        <dbReference type="ChEBI" id="CHEBI:33019"/>
        <dbReference type="ChEBI" id="CHEBI:43474"/>
        <dbReference type="EC" id="3.6.1.1"/>
    </reaction>
</comment>
<comment type="cofactor">
    <cofactor evidence="2">
        <name>Mg(2+)</name>
        <dbReference type="ChEBI" id="CHEBI:18420"/>
    </cofactor>
</comment>
<comment type="subunit">
    <text evidence="2">Homohexamer.</text>
</comment>
<comment type="subcellular location">
    <subcellularLocation>
        <location evidence="2">Cytoplasm</location>
    </subcellularLocation>
</comment>
<comment type="similarity">
    <text evidence="2">Belongs to the PPase family.</text>
</comment>
<name>IPYR_SALTI</name>